<feature type="chain" id="PRO_0000181742" description="tRNA(Ile)-lysidine synthase">
    <location>
        <begin position="1"/>
        <end position="435"/>
    </location>
</feature>
<feature type="binding site" evidence="1">
    <location>
        <begin position="25"/>
        <end position="30"/>
    </location>
    <ligand>
        <name>ATP</name>
        <dbReference type="ChEBI" id="CHEBI:30616"/>
    </ligand>
</feature>
<dbReference type="EC" id="6.3.4.19" evidence="1"/>
<dbReference type="EMBL" id="CR378672">
    <property type="protein sequence ID" value="CAG21285.1"/>
    <property type="molecule type" value="Genomic_DNA"/>
</dbReference>
<dbReference type="RefSeq" id="WP_011219552.1">
    <property type="nucleotide sequence ID" value="NC_006370.1"/>
</dbReference>
<dbReference type="SMR" id="Q6LN41"/>
<dbReference type="STRING" id="298386.PBPRA2951"/>
<dbReference type="KEGG" id="ppr:PBPRA2951"/>
<dbReference type="eggNOG" id="COG0037">
    <property type="taxonomic scope" value="Bacteria"/>
</dbReference>
<dbReference type="HOGENOM" id="CLU_018869_2_0_6"/>
<dbReference type="Proteomes" id="UP000000593">
    <property type="component" value="Chromosome 1"/>
</dbReference>
<dbReference type="GO" id="GO:0005737">
    <property type="term" value="C:cytoplasm"/>
    <property type="evidence" value="ECO:0007669"/>
    <property type="project" value="UniProtKB-SubCell"/>
</dbReference>
<dbReference type="GO" id="GO:0005524">
    <property type="term" value="F:ATP binding"/>
    <property type="evidence" value="ECO:0007669"/>
    <property type="project" value="UniProtKB-UniRule"/>
</dbReference>
<dbReference type="GO" id="GO:0032267">
    <property type="term" value="F:tRNA(Ile)-lysidine synthase activity"/>
    <property type="evidence" value="ECO:0007669"/>
    <property type="project" value="UniProtKB-EC"/>
</dbReference>
<dbReference type="GO" id="GO:0006400">
    <property type="term" value="P:tRNA modification"/>
    <property type="evidence" value="ECO:0007669"/>
    <property type="project" value="UniProtKB-UniRule"/>
</dbReference>
<dbReference type="CDD" id="cd01992">
    <property type="entry name" value="TilS_N"/>
    <property type="match status" value="1"/>
</dbReference>
<dbReference type="Gene3D" id="1.20.59.20">
    <property type="match status" value="1"/>
</dbReference>
<dbReference type="Gene3D" id="3.40.50.620">
    <property type="entry name" value="HUPs"/>
    <property type="match status" value="1"/>
</dbReference>
<dbReference type="HAMAP" id="MF_01161">
    <property type="entry name" value="tRNA_Ile_lys_synt"/>
    <property type="match status" value="1"/>
</dbReference>
<dbReference type="InterPro" id="IPR012796">
    <property type="entry name" value="Lysidine-tRNA-synth_C"/>
</dbReference>
<dbReference type="InterPro" id="IPR014729">
    <property type="entry name" value="Rossmann-like_a/b/a_fold"/>
</dbReference>
<dbReference type="InterPro" id="IPR011063">
    <property type="entry name" value="TilS/TtcA_N"/>
</dbReference>
<dbReference type="InterPro" id="IPR012094">
    <property type="entry name" value="tRNA_Ile_lys_synt"/>
</dbReference>
<dbReference type="InterPro" id="IPR012795">
    <property type="entry name" value="tRNA_Ile_lys_synt_N"/>
</dbReference>
<dbReference type="InterPro" id="IPR015262">
    <property type="entry name" value="tRNA_Ile_lys_synt_subst-bd"/>
</dbReference>
<dbReference type="NCBIfam" id="TIGR02433">
    <property type="entry name" value="lysidine_TilS_C"/>
    <property type="match status" value="1"/>
</dbReference>
<dbReference type="NCBIfam" id="TIGR02432">
    <property type="entry name" value="lysidine_TilS_N"/>
    <property type="match status" value="1"/>
</dbReference>
<dbReference type="PANTHER" id="PTHR43033">
    <property type="entry name" value="TRNA(ILE)-LYSIDINE SYNTHASE-RELATED"/>
    <property type="match status" value="1"/>
</dbReference>
<dbReference type="PANTHER" id="PTHR43033:SF1">
    <property type="entry name" value="TRNA(ILE)-LYSIDINE SYNTHASE-RELATED"/>
    <property type="match status" value="1"/>
</dbReference>
<dbReference type="Pfam" id="PF01171">
    <property type="entry name" value="ATP_bind_3"/>
    <property type="match status" value="1"/>
</dbReference>
<dbReference type="Pfam" id="PF09179">
    <property type="entry name" value="TilS"/>
    <property type="match status" value="1"/>
</dbReference>
<dbReference type="Pfam" id="PF11734">
    <property type="entry name" value="TilS_C"/>
    <property type="match status" value="1"/>
</dbReference>
<dbReference type="SMART" id="SM00977">
    <property type="entry name" value="TilS_C"/>
    <property type="match status" value="1"/>
</dbReference>
<dbReference type="SUPFAM" id="SSF52402">
    <property type="entry name" value="Adenine nucleotide alpha hydrolases-like"/>
    <property type="match status" value="1"/>
</dbReference>
<dbReference type="SUPFAM" id="SSF82829">
    <property type="entry name" value="MesJ substrate recognition domain-like"/>
    <property type="match status" value="1"/>
</dbReference>
<dbReference type="SUPFAM" id="SSF56037">
    <property type="entry name" value="PheT/TilS domain"/>
    <property type="match status" value="1"/>
</dbReference>
<evidence type="ECO:0000255" key="1">
    <source>
        <dbReference type="HAMAP-Rule" id="MF_01161"/>
    </source>
</evidence>
<organism>
    <name type="scientific">Photobacterium profundum (strain SS9)</name>
    <dbReference type="NCBI Taxonomy" id="298386"/>
    <lineage>
        <taxon>Bacteria</taxon>
        <taxon>Pseudomonadati</taxon>
        <taxon>Pseudomonadota</taxon>
        <taxon>Gammaproteobacteria</taxon>
        <taxon>Vibrionales</taxon>
        <taxon>Vibrionaceae</taxon>
        <taxon>Photobacterium</taxon>
    </lineage>
</organism>
<protein>
    <recommendedName>
        <fullName evidence="1">tRNA(Ile)-lysidine synthase</fullName>
        <ecNumber evidence="1">6.3.4.19</ecNumber>
    </recommendedName>
    <alternativeName>
        <fullName evidence="1">tRNA(Ile)-2-lysyl-cytidine synthase</fullName>
    </alternativeName>
    <alternativeName>
        <fullName evidence="1">tRNA(Ile)-lysidine synthetase</fullName>
    </alternativeName>
</protein>
<accession>Q6LN41</accession>
<gene>
    <name evidence="1" type="primary">tilS</name>
    <name type="ordered locus">PBPRA2951</name>
</gene>
<reference key="1">
    <citation type="journal article" date="2005" name="Science">
        <title>Life at depth: Photobacterium profundum genome sequence and expression analysis.</title>
        <authorList>
            <person name="Vezzi A."/>
            <person name="Campanaro S."/>
            <person name="D'Angelo M."/>
            <person name="Simonato F."/>
            <person name="Vitulo N."/>
            <person name="Lauro F.M."/>
            <person name="Cestaro A."/>
            <person name="Malacrida G."/>
            <person name="Simionati B."/>
            <person name="Cannata N."/>
            <person name="Romualdi C."/>
            <person name="Bartlett D.H."/>
            <person name="Valle G."/>
        </authorList>
    </citation>
    <scope>NUCLEOTIDE SEQUENCE [LARGE SCALE GENOMIC DNA]</scope>
    <source>
        <strain>ATCC BAA-1253 / SS9</strain>
    </source>
</reference>
<sequence>MLYSSLRSSLLANIPHSNRFVIALSGGLDSRVLLHLMGRFIQENPQYQCDAVHVHHGLSVNADKWAQQCLQWAFEEKITCHIEHVTLVLGNRISVEQQAREQRYLALSKHVQQGDCLLTAQHADDQLETFLLALKRGSGPAGLASMPESTTFGISYHLRPLLQVTRQSITDYGIAHQLEWVEDESNQDQRYDRNFLRHQITPLLHQRWPGIRKAVSRSAALCGEQEALLNELLASHLSKALHVDQSLKIVELGSERIGKQLIRQWLSLFTVLMPSQAQLQQIWQSVVLAQDDANPQVCWDNHQIRRYKQRLYVVKQWADISLFQQKCELNQACSLPEGLGTLVLTTVKANGILRLPQQHEIVSVRFEPEGIEAKPQGRIGKRKLKKLFQEYEVPSWNRRRTPLVFYNDRLAAVAGLFVTEDFFGEDCDLDWLCNS</sequence>
<comment type="function">
    <text evidence="1">Ligates lysine onto the cytidine present at position 34 of the AUA codon-specific tRNA(Ile) that contains the anticodon CAU, in an ATP-dependent manner. Cytidine is converted to lysidine, thus changing the amino acid specificity of the tRNA from methionine to isoleucine.</text>
</comment>
<comment type="catalytic activity">
    <reaction evidence="1">
        <text>cytidine(34) in tRNA(Ile2) + L-lysine + ATP = lysidine(34) in tRNA(Ile2) + AMP + diphosphate + H(+)</text>
        <dbReference type="Rhea" id="RHEA:43744"/>
        <dbReference type="Rhea" id="RHEA-COMP:10625"/>
        <dbReference type="Rhea" id="RHEA-COMP:10670"/>
        <dbReference type="ChEBI" id="CHEBI:15378"/>
        <dbReference type="ChEBI" id="CHEBI:30616"/>
        <dbReference type="ChEBI" id="CHEBI:32551"/>
        <dbReference type="ChEBI" id="CHEBI:33019"/>
        <dbReference type="ChEBI" id="CHEBI:82748"/>
        <dbReference type="ChEBI" id="CHEBI:83665"/>
        <dbReference type="ChEBI" id="CHEBI:456215"/>
        <dbReference type="EC" id="6.3.4.19"/>
    </reaction>
</comment>
<comment type="subcellular location">
    <subcellularLocation>
        <location evidence="1">Cytoplasm</location>
    </subcellularLocation>
</comment>
<comment type="domain">
    <text>The N-terminal region contains the highly conserved SGGXDS motif, predicted to be a P-loop motif involved in ATP binding.</text>
</comment>
<comment type="similarity">
    <text evidence="1">Belongs to the tRNA(Ile)-lysidine synthase family.</text>
</comment>
<keyword id="KW-0067">ATP-binding</keyword>
<keyword id="KW-0963">Cytoplasm</keyword>
<keyword id="KW-0436">Ligase</keyword>
<keyword id="KW-0547">Nucleotide-binding</keyword>
<keyword id="KW-1185">Reference proteome</keyword>
<keyword id="KW-0819">tRNA processing</keyword>
<proteinExistence type="inferred from homology"/>
<name>TILS_PHOPR</name>